<gene>
    <name evidence="1" type="primary">aroK</name>
    <name type="ordered locus">BSUIS_A1870</name>
</gene>
<dbReference type="EC" id="2.7.1.71" evidence="1"/>
<dbReference type="EMBL" id="CP000911">
    <property type="protein sequence ID" value="ABY38883.1"/>
    <property type="molecule type" value="Genomic_DNA"/>
</dbReference>
<dbReference type="RefSeq" id="WP_002971869.1">
    <property type="nucleotide sequence ID" value="NC_010169.1"/>
</dbReference>
<dbReference type="SMR" id="B0CJD1"/>
<dbReference type="KEGG" id="bmt:BSUIS_A1870"/>
<dbReference type="HOGENOM" id="CLU_057607_2_0_5"/>
<dbReference type="UniPathway" id="UPA00053">
    <property type="reaction ID" value="UER00088"/>
</dbReference>
<dbReference type="Proteomes" id="UP000008545">
    <property type="component" value="Chromosome I"/>
</dbReference>
<dbReference type="GO" id="GO:0005829">
    <property type="term" value="C:cytosol"/>
    <property type="evidence" value="ECO:0007669"/>
    <property type="project" value="TreeGrafter"/>
</dbReference>
<dbReference type="GO" id="GO:0005524">
    <property type="term" value="F:ATP binding"/>
    <property type="evidence" value="ECO:0007669"/>
    <property type="project" value="UniProtKB-UniRule"/>
</dbReference>
<dbReference type="GO" id="GO:0000287">
    <property type="term" value="F:magnesium ion binding"/>
    <property type="evidence" value="ECO:0007669"/>
    <property type="project" value="UniProtKB-UniRule"/>
</dbReference>
<dbReference type="GO" id="GO:0004765">
    <property type="term" value="F:shikimate kinase activity"/>
    <property type="evidence" value="ECO:0007669"/>
    <property type="project" value="UniProtKB-UniRule"/>
</dbReference>
<dbReference type="GO" id="GO:0008652">
    <property type="term" value="P:amino acid biosynthetic process"/>
    <property type="evidence" value="ECO:0007669"/>
    <property type="project" value="UniProtKB-KW"/>
</dbReference>
<dbReference type="GO" id="GO:0009073">
    <property type="term" value="P:aromatic amino acid family biosynthetic process"/>
    <property type="evidence" value="ECO:0007669"/>
    <property type="project" value="UniProtKB-KW"/>
</dbReference>
<dbReference type="GO" id="GO:0009423">
    <property type="term" value="P:chorismate biosynthetic process"/>
    <property type="evidence" value="ECO:0007669"/>
    <property type="project" value="UniProtKB-UniRule"/>
</dbReference>
<dbReference type="CDD" id="cd00464">
    <property type="entry name" value="SK"/>
    <property type="match status" value="1"/>
</dbReference>
<dbReference type="Gene3D" id="3.40.50.300">
    <property type="entry name" value="P-loop containing nucleotide triphosphate hydrolases"/>
    <property type="match status" value="1"/>
</dbReference>
<dbReference type="HAMAP" id="MF_00109">
    <property type="entry name" value="Shikimate_kinase"/>
    <property type="match status" value="1"/>
</dbReference>
<dbReference type="InterPro" id="IPR027417">
    <property type="entry name" value="P-loop_NTPase"/>
</dbReference>
<dbReference type="InterPro" id="IPR031322">
    <property type="entry name" value="Shikimate/glucono_kinase"/>
</dbReference>
<dbReference type="InterPro" id="IPR000623">
    <property type="entry name" value="Shikimate_kinase/TSH1"/>
</dbReference>
<dbReference type="NCBIfam" id="NF010552">
    <property type="entry name" value="PRK13946.1"/>
    <property type="match status" value="1"/>
</dbReference>
<dbReference type="PANTHER" id="PTHR21087">
    <property type="entry name" value="SHIKIMATE KINASE"/>
    <property type="match status" value="1"/>
</dbReference>
<dbReference type="PANTHER" id="PTHR21087:SF16">
    <property type="entry name" value="SHIKIMATE KINASE 1, CHLOROPLASTIC"/>
    <property type="match status" value="1"/>
</dbReference>
<dbReference type="Pfam" id="PF01202">
    <property type="entry name" value="SKI"/>
    <property type="match status" value="1"/>
</dbReference>
<dbReference type="PRINTS" id="PR01100">
    <property type="entry name" value="SHIKIMTKNASE"/>
</dbReference>
<dbReference type="SUPFAM" id="SSF52540">
    <property type="entry name" value="P-loop containing nucleoside triphosphate hydrolases"/>
    <property type="match status" value="1"/>
</dbReference>
<proteinExistence type="inferred from homology"/>
<name>AROK_BRUSI</name>
<organism>
    <name type="scientific">Brucella suis (strain ATCC 23445 / NCTC 10510)</name>
    <dbReference type="NCBI Taxonomy" id="470137"/>
    <lineage>
        <taxon>Bacteria</taxon>
        <taxon>Pseudomonadati</taxon>
        <taxon>Pseudomonadota</taxon>
        <taxon>Alphaproteobacteria</taxon>
        <taxon>Hyphomicrobiales</taxon>
        <taxon>Brucellaceae</taxon>
        <taxon>Brucella/Ochrobactrum group</taxon>
        <taxon>Brucella</taxon>
    </lineage>
</organism>
<keyword id="KW-0028">Amino-acid biosynthesis</keyword>
<keyword id="KW-0057">Aromatic amino acid biosynthesis</keyword>
<keyword id="KW-0067">ATP-binding</keyword>
<keyword id="KW-0963">Cytoplasm</keyword>
<keyword id="KW-0418">Kinase</keyword>
<keyword id="KW-0460">Magnesium</keyword>
<keyword id="KW-0479">Metal-binding</keyword>
<keyword id="KW-0547">Nucleotide-binding</keyword>
<keyword id="KW-0808">Transferase</keyword>
<protein>
    <recommendedName>
        <fullName evidence="1">Shikimate kinase</fullName>
        <shortName evidence="1">SK</shortName>
        <ecNumber evidence="1">2.7.1.71</ecNumber>
    </recommendedName>
</protein>
<comment type="function">
    <text evidence="1">Catalyzes the specific phosphorylation of the 3-hydroxyl group of shikimic acid using ATP as a cosubstrate.</text>
</comment>
<comment type="catalytic activity">
    <reaction evidence="1">
        <text>shikimate + ATP = 3-phosphoshikimate + ADP + H(+)</text>
        <dbReference type="Rhea" id="RHEA:13121"/>
        <dbReference type="ChEBI" id="CHEBI:15378"/>
        <dbReference type="ChEBI" id="CHEBI:30616"/>
        <dbReference type="ChEBI" id="CHEBI:36208"/>
        <dbReference type="ChEBI" id="CHEBI:145989"/>
        <dbReference type="ChEBI" id="CHEBI:456216"/>
        <dbReference type="EC" id="2.7.1.71"/>
    </reaction>
</comment>
<comment type="cofactor">
    <cofactor evidence="1">
        <name>Mg(2+)</name>
        <dbReference type="ChEBI" id="CHEBI:18420"/>
    </cofactor>
    <text evidence="1">Binds 1 Mg(2+) ion per subunit.</text>
</comment>
<comment type="pathway">
    <text evidence="1">Metabolic intermediate biosynthesis; chorismate biosynthesis; chorismate from D-erythrose 4-phosphate and phosphoenolpyruvate: step 5/7.</text>
</comment>
<comment type="subunit">
    <text evidence="1">Monomer.</text>
</comment>
<comment type="subcellular location">
    <subcellularLocation>
        <location evidence="1">Cytoplasm</location>
    </subcellularLocation>
</comment>
<comment type="similarity">
    <text evidence="1">Belongs to the shikimate kinase family.</text>
</comment>
<feature type="chain" id="PRO_1000119050" description="Shikimate kinase">
    <location>
        <begin position="1"/>
        <end position="200"/>
    </location>
</feature>
<feature type="binding site" evidence="1">
    <location>
        <begin position="33"/>
        <end position="38"/>
    </location>
    <ligand>
        <name>ATP</name>
        <dbReference type="ChEBI" id="CHEBI:30616"/>
    </ligand>
</feature>
<feature type="binding site" evidence="1">
    <location>
        <position position="37"/>
    </location>
    <ligand>
        <name>Mg(2+)</name>
        <dbReference type="ChEBI" id="CHEBI:18420"/>
    </ligand>
</feature>
<feature type="binding site" evidence="1">
    <location>
        <position position="55"/>
    </location>
    <ligand>
        <name>substrate</name>
    </ligand>
</feature>
<feature type="binding site" evidence="1">
    <location>
        <position position="79"/>
    </location>
    <ligand>
        <name>substrate</name>
    </ligand>
</feature>
<feature type="binding site" evidence="1">
    <location>
        <position position="101"/>
    </location>
    <ligand>
        <name>substrate</name>
    </ligand>
</feature>
<feature type="binding site" evidence="1">
    <location>
        <position position="139"/>
    </location>
    <ligand>
        <name>ATP</name>
        <dbReference type="ChEBI" id="CHEBI:30616"/>
    </ligand>
</feature>
<feature type="binding site" evidence="1">
    <location>
        <position position="158"/>
    </location>
    <ligand>
        <name>substrate</name>
    </ligand>
</feature>
<accession>B0CJD1</accession>
<reference key="1">
    <citation type="submission" date="2007-12" db="EMBL/GenBank/DDBJ databases">
        <title>Brucella suis ATCC 23445 whole genome shotgun sequencing project.</title>
        <authorList>
            <person name="Setubal J.C."/>
            <person name="Bowns C."/>
            <person name="Boyle S."/>
            <person name="Crasta O.R."/>
            <person name="Czar M.J."/>
            <person name="Dharmanolla C."/>
            <person name="Gillespie J.J."/>
            <person name="Kenyon R.W."/>
            <person name="Lu J."/>
            <person name="Mane S."/>
            <person name="Mohapatra S."/>
            <person name="Nagrani S."/>
            <person name="Purkayastha A."/>
            <person name="Rajasimha H.K."/>
            <person name="Shallom J.M."/>
            <person name="Shallom S."/>
            <person name="Shukla M."/>
            <person name="Snyder E.E."/>
            <person name="Sobral B.W."/>
            <person name="Wattam A.R."/>
            <person name="Will R."/>
            <person name="Williams K."/>
            <person name="Yoo H."/>
            <person name="Bruce D."/>
            <person name="Detter C."/>
            <person name="Munk C."/>
            <person name="Brettin T.S."/>
        </authorList>
    </citation>
    <scope>NUCLEOTIDE SEQUENCE [LARGE SCALE GENOMIC DNA]</scope>
    <source>
        <strain>ATCC 23445 / NCTC 10510</strain>
    </source>
</reference>
<evidence type="ECO:0000255" key="1">
    <source>
        <dbReference type="HAMAP-Rule" id="MF_00109"/>
    </source>
</evidence>
<sequence length="200" mass="22235">MSGTNKQTNLHRQTETIRQLLGSKVVVLVGLMGAGKSTIGRKVANMLNLPFKDADTEIETVSRMTVAELFEAYGEVEFRDLERRVILRLLDDGPMVLATGGGAYMNAETRAAIAEAGISIWINADLDVLMERVSRRQNRPLLRNSDPRGVMQRLMDERYPVYALAELHLMTRDEKKEVIAAELIEVLAAHLEKEQAASAG</sequence>